<geneLocation type="chloroplast"/>
<comment type="function">
    <text evidence="1">Required during biogenesis of c-type cytochromes (cytochrome c6 and cytochrome f) at the step of heme attachment.</text>
</comment>
<comment type="subunit">
    <text evidence="1">May interact with Ccs1.</text>
</comment>
<comment type="subcellular location">
    <subcellularLocation>
        <location evidence="1">Plastid</location>
        <location evidence="1">Chloroplast thylakoid membrane</location>
        <topology evidence="1">Multi-pass membrane protein</topology>
    </subcellularLocation>
</comment>
<comment type="similarity">
    <text evidence="1">Belongs to the CcmF/CycK/Ccl1/NrfE/CcsA family.</text>
</comment>
<name>CCSA_LACSA</name>
<sequence length="322" mass="36944">MIFSTLEHIFTHISFSIVSIVIIIHLITLLGNEIIKPYDSSEKGMIVTFLCLTGLLITRWIYSGHFPLSDLYESLIFLSWSFSLIHIVPYFKIRKNYLTEITASSTIFTQGFATSGLLTEIRKPTILVPALQSEWLIMHVSMMILSYAALLCGSLLSVALLVITFRKIFYSYKSNNFLKLNESFSFGEIQYKNERNNILKKNYFLSAKNYYKAQLIQQLDYWSYRVISLGFIFLTIGILSGAVWANEAWGSYWSWDPKETWAFITWIVFAIYLHIRTNKNFQGANSAIVATLGFLIIWICYFGVNLLGIGLHSYGSFTLTSS</sequence>
<protein>
    <recommendedName>
        <fullName evidence="1">Cytochrome c biogenesis protein CcsA</fullName>
    </recommendedName>
</protein>
<feature type="chain" id="PRO_0000353762" description="Cytochrome c biogenesis protein CcsA">
    <location>
        <begin position="1"/>
        <end position="322"/>
    </location>
</feature>
<feature type="transmembrane region" description="Helical" evidence="1">
    <location>
        <begin position="9"/>
        <end position="29"/>
    </location>
</feature>
<feature type="transmembrane region" description="Helical" evidence="1">
    <location>
        <begin position="44"/>
        <end position="64"/>
    </location>
</feature>
<feature type="transmembrane region" description="Helical" evidence="1">
    <location>
        <begin position="71"/>
        <end position="91"/>
    </location>
</feature>
<feature type="transmembrane region" description="Helical" evidence="1">
    <location>
        <begin position="143"/>
        <end position="163"/>
    </location>
</feature>
<feature type="transmembrane region" description="Helical" evidence="1">
    <location>
        <begin position="226"/>
        <end position="246"/>
    </location>
</feature>
<feature type="transmembrane region" description="Helical" evidence="1">
    <location>
        <begin position="255"/>
        <end position="275"/>
    </location>
</feature>
<feature type="transmembrane region" description="Helical" evidence="1">
    <location>
        <begin position="287"/>
        <end position="307"/>
    </location>
</feature>
<keyword id="KW-0150">Chloroplast</keyword>
<keyword id="KW-0201">Cytochrome c-type biogenesis</keyword>
<keyword id="KW-0472">Membrane</keyword>
<keyword id="KW-0934">Plastid</keyword>
<keyword id="KW-0793">Thylakoid</keyword>
<keyword id="KW-0812">Transmembrane</keyword>
<keyword id="KW-1133">Transmembrane helix</keyword>
<reference key="1">
    <citation type="journal article" date="2006" name="Transgenic Res.">
        <title>Efficient and stable transformation of Lactuca sativa L. cv. Cisco (lettuce) plastids.</title>
        <authorList>
            <person name="Kanamoto H."/>
            <person name="Yamashita A."/>
            <person name="Asao H."/>
            <person name="Okumura S."/>
            <person name="Takase H."/>
            <person name="Hattori M."/>
            <person name="Yokota A."/>
            <person name="Tomizawa K."/>
        </authorList>
    </citation>
    <scope>NUCLEOTIDE SEQUENCE [LARGE SCALE GENOMIC DNA]</scope>
    <source>
        <strain>cv. Cisco</strain>
    </source>
</reference>
<reference key="2">
    <citation type="submission" date="2006-01" db="EMBL/GenBank/DDBJ databases">
        <title>A comparison of the first two published chloroplast genomes in Asteraceae: Lactuca and Helianthus.</title>
        <authorList>
            <person name="Timme R.E."/>
            <person name="Kuehl J.V."/>
            <person name="Boore J.L."/>
            <person name="Jansen R.K."/>
        </authorList>
    </citation>
    <scope>NUCLEOTIDE SEQUENCE [LARGE SCALE GENOMIC DNA]</scope>
    <source>
        <strain>cv. Salinas</strain>
    </source>
</reference>
<gene>
    <name evidence="1" type="primary">ccsA</name>
</gene>
<organism>
    <name type="scientific">Lactuca sativa</name>
    <name type="common">Garden lettuce</name>
    <dbReference type="NCBI Taxonomy" id="4236"/>
    <lineage>
        <taxon>Eukaryota</taxon>
        <taxon>Viridiplantae</taxon>
        <taxon>Streptophyta</taxon>
        <taxon>Embryophyta</taxon>
        <taxon>Tracheophyta</taxon>
        <taxon>Spermatophyta</taxon>
        <taxon>Magnoliopsida</taxon>
        <taxon>eudicotyledons</taxon>
        <taxon>Gunneridae</taxon>
        <taxon>Pentapetalae</taxon>
        <taxon>asterids</taxon>
        <taxon>campanulids</taxon>
        <taxon>Asterales</taxon>
        <taxon>Asteraceae</taxon>
        <taxon>Cichorioideae</taxon>
        <taxon>Cichorieae</taxon>
        <taxon>Lactucinae</taxon>
        <taxon>Lactuca</taxon>
    </lineage>
</organism>
<dbReference type="EMBL" id="DQ383816">
    <property type="protein sequence ID" value="ABD47289.1"/>
    <property type="molecule type" value="Genomic_DNA"/>
</dbReference>
<dbReference type="EMBL" id="AP007232">
    <property type="protein sequence ID" value="BAE47644.1"/>
    <property type="molecule type" value="Genomic_DNA"/>
</dbReference>
<dbReference type="RefSeq" id="YP_398377.1">
    <property type="nucleotide sequence ID" value="NC_007578.1"/>
</dbReference>
<dbReference type="SMR" id="Q332S8"/>
<dbReference type="GeneID" id="3772899"/>
<dbReference type="KEGG" id="lsv:3772899"/>
<dbReference type="OrthoDB" id="1640at2759"/>
<dbReference type="GO" id="GO:0009535">
    <property type="term" value="C:chloroplast thylakoid membrane"/>
    <property type="evidence" value="ECO:0007669"/>
    <property type="project" value="UniProtKB-SubCell"/>
</dbReference>
<dbReference type="GO" id="GO:0020037">
    <property type="term" value="F:heme binding"/>
    <property type="evidence" value="ECO:0007669"/>
    <property type="project" value="InterPro"/>
</dbReference>
<dbReference type="GO" id="GO:0017004">
    <property type="term" value="P:cytochrome complex assembly"/>
    <property type="evidence" value="ECO:0007669"/>
    <property type="project" value="UniProtKB-UniRule"/>
</dbReference>
<dbReference type="HAMAP" id="MF_01391">
    <property type="entry name" value="CytC_CcsA"/>
    <property type="match status" value="1"/>
</dbReference>
<dbReference type="InterPro" id="IPR002541">
    <property type="entry name" value="Cyt_c_assembly"/>
</dbReference>
<dbReference type="InterPro" id="IPR017562">
    <property type="entry name" value="Cyt_c_biogenesis_CcsA"/>
</dbReference>
<dbReference type="InterPro" id="IPR045062">
    <property type="entry name" value="Cyt_c_biogenesis_CcsA/CcmC"/>
</dbReference>
<dbReference type="NCBIfam" id="TIGR03144">
    <property type="entry name" value="cytochr_II_ccsB"/>
    <property type="match status" value="1"/>
</dbReference>
<dbReference type="PANTHER" id="PTHR30071:SF1">
    <property type="entry name" value="CYTOCHROME B_B6 PROTEIN-RELATED"/>
    <property type="match status" value="1"/>
</dbReference>
<dbReference type="PANTHER" id="PTHR30071">
    <property type="entry name" value="HEME EXPORTER PROTEIN C"/>
    <property type="match status" value="1"/>
</dbReference>
<dbReference type="Pfam" id="PF01578">
    <property type="entry name" value="Cytochrom_C_asm"/>
    <property type="match status" value="1"/>
</dbReference>
<proteinExistence type="inferred from homology"/>
<evidence type="ECO:0000255" key="1">
    <source>
        <dbReference type="HAMAP-Rule" id="MF_01391"/>
    </source>
</evidence>
<accession>Q332S8</accession>